<evidence type="ECO:0000250" key="1"/>
<evidence type="ECO:0000250" key="2">
    <source>
        <dbReference type="UniProtKB" id="A7MAZ5"/>
    </source>
</evidence>
<evidence type="ECO:0000250" key="3">
    <source>
        <dbReference type="UniProtKB" id="P43275"/>
    </source>
</evidence>
<evidence type="ECO:0000250" key="4">
    <source>
        <dbReference type="UniProtKB" id="P43277"/>
    </source>
</evidence>
<evidence type="ECO:0000255" key="5">
    <source>
        <dbReference type="PROSITE-ProRule" id="PRU00837"/>
    </source>
</evidence>
<evidence type="ECO:0000256" key="6">
    <source>
        <dbReference type="SAM" id="MobiDB-lite"/>
    </source>
</evidence>
<evidence type="ECO:0000269" key="7">
    <source>
    </source>
</evidence>
<evidence type="ECO:0000269" key="8">
    <source>
    </source>
</evidence>
<evidence type="ECO:0000312" key="9">
    <source>
        <dbReference type="HGNC" id="HGNC:4717"/>
    </source>
</evidence>
<evidence type="ECO:0007744" key="10">
    <source>
    </source>
</evidence>
<evidence type="ECO:0007744" key="11">
    <source>
    </source>
</evidence>
<evidence type="ECO:0007744" key="12">
    <source>
    </source>
</evidence>
<evidence type="ECO:0007744" key="13">
    <source>
    </source>
</evidence>
<evidence type="ECO:0007744" key="14">
    <source>
    </source>
</evidence>
<evidence type="ECO:0007744" key="15">
    <source>
    </source>
</evidence>
<evidence type="ECO:0007829" key="16">
    <source>
        <dbReference type="PDB" id="7XX5"/>
    </source>
</evidence>
<keyword id="KW-0002">3D-structure</keyword>
<keyword id="KW-0007">Acetylation</keyword>
<keyword id="KW-0158">Chromosome</keyword>
<keyword id="KW-0164">Citrullination</keyword>
<keyword id="KW-0903">Direct protein sequencing</keyword>
<keyword id="KW-0238">DNA-binding</keyword>
<keyword id="KW-0379">Hydroxylation</keyword>
<keyword id="KW-0539">Nucleus</keyword>
<keyword id="KW-0597">Phosphoprotein</keyword>
<keyword id="KW-1267">Proteomics identification</keyword>
<keyword id="KW-1185">Reference proteome</keyword>
<organism>
    <name type="scientific">Homo sapiens</name>
    <name type="common">Human</name>
    <dbReference type="NCBI Taxonomy" id="9606"/>
    <lineage>
        <taxon>Eukaryota</taxon>
        <taxon>Metazoa</taxon>
        <taxon>Chordata</taxon>
        <taxon>Craniata</taxon>
        <taxon>Vertebrata</taxon>
        <taxon>Euteleostomi</taxon>
        <taxon>Mammalia</taxon>
        <taxon>Eutheria</taxon>
        <taxon>Euarchontoglires</taxon>
        <taxon>Primates</taxon>
        <taxon>Haplorrhini</taxon>
        <taxon>Catarrhini</taxon>
        <taxon>Hominidae</taxon>
        <taxon>Homo</taxon>
    </lineage>
</organism>
<comment type="function">
    <text evidence="1">Histone H1 protein binds to linker DNA between nucleosomes forming the macromolecular structure known as the chromatin fiber. Histones H1 are necessary for the condensation of nucleosome chains into higher-order structured fibers. Also acts as a regulator of individual gene transcription through chromatin remodeling, nucleosome spacing and DNA methylation (By similarity).</text>
</comment>
<comment type="interaction">
    <interactant intactId="EBI-1052479">
        <id>P16402</id>
    </interactant>
    <interactant intactId="EBI-745269">
        <id>Q9NPC3</id>
        <label>CCNB1IP1</label>
    </interactant>
    <organismsDiffer>false</organismsDiffer>
    <experiments>2</experiments>
</comment>
<comment type="interaction">
    <interactant intactId="EBI-1052479">
        <id>P16402</id>
    </interactant>
    <interactant intactId="EBI-746843">
        <id>P17096</id>
        <label>HMGA1</label>
    </interactant>
    <organismsDiffer>false</organismsDiffer>
    <experiments>2</experiments>
</comment>
<comment type="interaction">
    <interactant intactId="EBI-1052479">
        <id>P16402</id>
    </interactant>
    <interactant intactId="EBI-10750665">
        <id>Q6ZS27</id>
        <label>ZNF662</label>
    </interactant>
    <organismsDiffer>false</organismsDiffer>
    <experiments>2</experiments>
</comment>
<comment type="subcellular location">
    <subcellularLocation>
        <location>Nucleus</location>
    </subcellularLocation>
    <subcellularLocation>
        <location>Chromosome</location>
    </subcellularLocation>
    <text>According to PubMed:15911621 more commonly found in euchromatin. According to PubMed:10997781 is associated with inactive chromatin.</text>
</comment>
<comment type="domain">
    <text evidence="1">The C-terminal domain is required for high-affinity binding to chromatin.</text>
</comment>
<comment type="PTM">
    <text evidence="3">H1 histones are progressively phosphorylated during the cell cycle, becoming maximally phosphorylated during late G2 phase and M phase, and being dephosphorylated sharply thereafter.</text>
</comment>
<comment type="PTM">
    <text evidence="4">Citrullination at Arg-55 (H1R54ci) by PADI4 takes place within the DNA-binding site of H1 and results in its displacement from chromatin and global chromatin decondensation, thereby promoting pluripotency and stem cell maintenance.</text>
</comment>
<comment type="similarity">
    <text evidence="5">Belongs to the histone H1/H5 family.</text>
</comment>
<proteinExistence type="evidence at protein level"/>
<dbReference type="EMBL" id="M60747">
    <property type="protein sequence ID" value="AAA63186.1"/>
    <property type="molecule type" value="Genomic_DNA"/>
</dbReference>
<dbReference type="EMBL" id="AF531303">
    <property type="protein sequence ID" value="AAN06703.1"/>
    <property type="molecule type" value="Genomic_DNA"/>
</dbReference>
<dbReference type="EMBL" id="AK312845">
    <property type="protein sequence ID" value="BAG35698.1"/>
    <property type="molecule type" value="mRNA"/>
</dbReference>
<dbReference type="EMBL" id="AL031777">
    <property type="status" value="NOT_ANNOTATED_CDS"/>
    <property type="molecule type" value="Genomic_DNA"/>
</dbReference>
<dbReference type="EMBL" id="CH471087">
    <property type="protein sequence ID" value="EAW55548.1"/>
    <property type="molecule type" value="Genomic_DNA"/>
</dbReference>
<dbReference type="EMBL" id="BC104874">
    <property type="protein sequence ID" value="AAI04875.1"/>
    <property type="molecule type" value="mRNA"/>
</dbReference>
<dbReference type="EMBL" id="BC111971">
    <property type="protein sequence ID" value="AAI11972.1"/>
    <property type="molecule type" value="mRNA"/>
</dbReference>
<dbReference type="CCDS" id="CCDS4597.1"/>
<dbReference type="PIR" id="B40335">
    <property type="entry name" value="B40335"/>
</dbReference>
<dbReference type="RefSeq" id="NP_005311.1">
    <property type="nucleotide sequence ID" value="NM_005320.3"/>
</dbReference>
<dbReference type="PDB" id="7XX5">
    <property type="method" value="X-ray"/>
    <property type="resolution" value="3.19 A"/>
    <property type="chains" value="U=1-221"/>
</dbReference>
<dbReference type="PDBsum" id="7XX5"/>
<dbReference type="SMR" id="P16402"/>
<dbReference type="BioGRID" id="109262">
    <property type="interactions" value="385"/>
</dbReference>
<dbReference type="CORUM" id="P16402"/>
<dbReference type="FunCoup" id="P16402">
    <property type="interactions" value="1332"/>
</dbReference>
<dbReference type="IntAct" id="P16402">
    <property type="interactions" value="145"/>
</dbReference>
<dbReference type="MINT" id="P16402"/>
<dbReference type="STRING" id="9606.ENSP00000244534"/>
<dbReference type="GlyGen" id="P16402">
    <property type="glycosylation" value="1 site, 1 O-linked glycan (1 site)"/>
</dbReference>
<dbReference type="iPTMnet" id="P16402"/>
<dbReference type="PhosphoSitePlus" id="P16402"/>
<dbReference type="SwissPalm" id="P16402"/>
<dbReference type="BioMuta" id="HIST1H1D"/>
<dbReference type="DMDM" id="121925"/>
<dbReference type="jPOST" id="P16402"/>
<dbReference type="MassIVE" id="P16402"/>
<dbReference type="PaxDb" id="9606-ENSP00000244534"/>
<dbReference type="PeptideAtlas" id="P16402"/>
<dbReference type="PRIDE" id="P16402"/>
<dbReference type="ProteomicsDB" id="53352"/>
<dbReference type="Pumba" id="P16402"/>
<dbReference type="Antibodypedia" id="58672">
    <property type="antibodies" value="133 antibodies from 17 providers"/>
</dbReference>
<dbReference type="DNASU" id="3007"/>
<dbReference type="Ensembl" id="ENST00000244534.7">
    <property type="protein sequence ID" value="ENSP00000244534.6"/>
    <property type="gene ID" value="ENSG00000124575.7"/>
</dbReference>
<dbReference type="GeneID" id="3007"/>
<dbReference type="KEGG" id="hsa:3007"/>
<dbReference type="MANE-Select" id="ENST00000244534.7">
    <property type="protein sequence ID" value="ENSP00000244534.6"/>
    <property type="RefSeq nucleotide sequence ID" value="NM_005320.3"/>
    <property type="RefSeq protein sequence ID" value="NP_005311.1"/>
</dbReference>
<dbReference type="UCSC" id="uc003nhd.4">
    <property type="organism name" value="human"/>
</dbReference>
<dbReference type="AGR" id="HGNC:4717"/>
<dbReference type="CTD" id="3007"/>
<dbReference type="DisGeNET" id="3007"/>
<dbReference type="GeneCards" id="H1-3"/>
<dbReference type="HGNC" id="HGNC:4717">
    <property type="gene designation" value="H1-3"/>
</dbReference>
<dbReference type="HPA" id="ENSG00000124575">
    <property type="expression patterns" value="Tissue enhanced (bone marrow, choroid plexus)"/>
</dbReference>
<dbReference type="MalaCards" id="H1-3"/>
<dbReference type="MIM" id="142210">
    <property type="type" value="gene"/>
</dbReference>
<dbReference type="neXtProt" id="NX_P16402"/>
<dbReference type="OpenTargets" id="ENSG00000124575"/>
<dbReference type="VEuPathDB" id="HostDB:ENSG00000124575"/>
<dbReference type="eggNOG" id="KOG4012">
    <property type="taxonomic scope" value="Eukaryota"/>
</dbReference>
<dbReference type="GeneTree" id="ENSGT00940000155501"/>
<dbReference type="HOGENOM" id="CLU_052897_7_0_1"/>
<dbReference type="InParanoid" id="P16402"/>
<dbReference type="OMA" id="CEREGSM"/>
<dbReference type="OrthoDB" id="9634976at2759"/>
<dbReference type="PAN-GO" id="P16402">
    <property type="GO annotations" value="5 GO annotations based on evolutionary models"/>
</dbReference>
<dbReference type="PhylomeDB" id="P16402"/>
<dbReference type="TreeFam" id="TF313664"/>
<dbReference type="PathwayCommons" id="P16402"/>
<dbReference type="Reactome" id="R-HSA-140342">
    <property type="pathway name" value="Apoptosis induced DNA fragmentation"/>
</dbReference>
<dbReference type="Reactome" id="R-HSA-2559584">
    <property type="pathway name" value="Formation of Senescence-Associated Heterochromatin Foci (SAHF)"/>
</dbReference>
<dbReference type="SignaLink" id="P16402"/>
<dbReference type="BioGRID-ORCS" id="3007">
    <property type="hits" value="20 hits in 1145 CRISPR screens"/>
</dbReference>
<dbReference type="CD-CODE" id="91857CE7">
    <property type="entry name" value="Nucleolus"/>
</dbReference>
<dbReference type="ChiTaRS" id="HIST1H1D">
    <property type="organism name" value="human"/>
</dbReference>
<dbReference type="GeneWiki" id="HIST1H1D"/>
<dbReference type="GenomeRNAi" id="3007"/>
<dbReference type="Pharos" id="P16402">
    <property type="development level" value="Tbio"/>
</dbReference>
<dbReference type="PRO" id="PR:P16402"/>
<dbReference type="Proteomes" id="UP000005640">
    <property type="component" value="Chromosome 6"/>
</dbReference>
<dbReference type="RNAct" id="P16402">
    <property type="molecule type" value="protein"/>
</dbReference>
<dbReference type="Bgee" id="ENSG00000124575">
    <property type="expression patterns" value="Expressed in adrenal tissue and 119 other cell types or tissues"/>
</dbReference>
<dbReference type="GO" id="GO:0000785">
    <property type="term" value="C:chromatin"/>
    <property type="evidence" value="ECO:0000314"/>
    <property type="project" value="UniProtKB"/>
</dbReference>
<dbReference type="GO" id="GO:0000791">
    <property type="term" value="C:euchromatin"/>
    <property type="evidence" value="ECO:0000314"/>
    <property type="project" value="UniProtKB"/>
</dbReference>
<dbReference type="GO" id="GO:0000786">
    <property type="term" value="C:nucleosome"/>
    <property type="evidence" value="ECO:0007669"/>
    <property type="project" value="InterPro"/>
</dbReference>
<dbReference type="GO" id="GO:0005634">
    <property type="term" value="C:nucleus"/>
    <property type="evidence" value="ECO:0000318"/>
    <property type="project" value="GO_Central"/>
</dbReference>
<dbReference type="GO" id="GO:0031490">
    <property type="term" value="F:chromatin DNA binding"/>
    <property type="evidence" value="ECO:0000314"/>
    <property type="project" value="UniProtKB"/>
</dbReference>
<dbReference type="GO" id="GO:0003690">
    <property type="term" value="F:double-stranded DNA binding"/>
    <property type="evidence" value="ECO:0000318"/>
    <property type="project" value="GO_Central"/>
</dbReference>
<dbReference type="GO" id="GO:0031492">
    <property type="term" value="F:nucleosomal DNA binding"/>
    <property type="evidence" value="ECO:0000318"/>
    <property type="project" value="GO_Central"/>
</dbReference>
<dbReference type="GO" id="GO:0003723">
    <property type="term" value="F:RNA binding"/>
    <property type="evidence" value="ECO:0007005"/>
    <property type="project" value="UniProtKB"/>
</dbReference>
<dbReference type="GO" id="GO:0030527">
    <property type="term" value="F:structural constituent of chromatin"/>
    <property type="evidence" value="ECO:0007669"/>
    <property type="project" value="Ensembl"/>
</dbReference>
<dbReference type="GO" id="GO:0030261">
    <property type="term" value="P:chromosome condensation"/>
    <property type="evidence" value="ECO:0000318"/>
    <property type="project" value="GO_Central"/>
</dbReference>
<dbReference type="GO" id="GO:0045910">
    <property type="term" value="P:negative regulation of DNA recombination"/>
    <property type="evidence" value="ECO:0000318"/>
    <property type="project" value="GO_Central"/>
</dbReference>
<dbReference type="GO" id="GO:0000122">
    <property type="term" value="P:negative regulation of transcription by RNA polymerase II"/>
    <property type="evidence" value="ECO:0007669"/>
    <property type="project" value="Ensembl"/>
</dbReference>
<dbReference type="GO" id="GO:0006334">
    <property type="term" value="P:nucleosome assembly"/>
    <property type="evidence" value="ECO:0007669"/>
    <property type="project" value="InterPro"/>
</dbReference>
<dbReference type="CDD" id="cd00073">
    <property type="entry name" value="H15"/>
    <property type="match status" value="1"/>
</dbReference>
<dbReference type="FunFam" id="1.10.10.10:FF:000075">
    <property type="entry name" value="Histone H1 like"/>
    <property type="match status" value="1"/>
</dbReference>
<dbReference type="Gene3D" id="1.10.10.10">
    <property type="entry name" value="Winged helix-like DNA-binding domain superfamily/Winged helix DNA-binding domain"/>
    <property type="match status" value="1"/>
</dbReference>
<dbReference type="InterPro" id="IPR005819">
    <property type="entry name" value="H1/H5"/>
</dbReference>
<dbReference type="InterPro" id="IPR005818">
    <property type="entry name" value="Histone_H1/H5_H15"/>
</dbReference>
<dbReference type="InterPro" id="IPR036388">
    <property type="entry name" value="WH-like_DNA-bd_sf"/>
</dbReference>
<dbReference type="InterPro" id="IPR036390">
    <property type="entry name" value="WH_DNA-bd_sf"/>
</dbReference>
<dbReference type="Pfam" id="PF00538">
    <property type="entry name" value="Linker_histone"/>
    <property type="match status" value="1"/>
</dbReference>
<dbReference type="PRINTS" id="PR00624">
    <property type="entry name" value="HISTONEH5"/>
</dbReference>
<dbReference type="SMART" id="SM00526">
    <property type="entry name" value="H15"/>
    <property type="match status" value="1"/>
</dbReference>
<dbReference type="SUPFAM" id="SSF46785">
    <property type="entry name" value="Winged helix' DNA-binding domain"/>
    <property type="match status" value="1"/>
</dbReference>
<dbReference type="PROSITE" id="PS51504">
    <property type="entry name" value="H15"/>
    <property type="match status" value="1"/>
</dbReference>
<reference key="1">
    <citation type="journal article" date="1991" name="Genomics">
        <title>Isolation and characterization of two human H1 histone genes within clusters of core histone genes.</title>
        <authorList>
            <person name="Albig W."/>
            <person name="Kardalinou E."/>
            <person name="Drabent B."/>
            <person name="Zimmer A."/>
            <person name="Doenecke D."/>
        </authorList>
    </citation>
    <scope>NUCLEOTIDE SEQUENCE [GENOMIC DNA]</scope>
</reference>
<reference key="2">
    <citation type="journal article" date="2002" name="Genomics">
        <title>The human and mouse replication-dependent histone genes.</title>
        <authorList>
            <person name="Marzluff W.F."/>
            <person name="Gongidi P."/>
            <person name="Woods K.R."/>
            <person name="Jin J."/>
            <person name="Maltais L.J."/>
        </authorList>
    </citation>
    <scope>NUCLEOTIDE SEQUENCE [GENOMIC DNA]</scope>
</reference>
<reference key="3">
    <citation type="journal article" date="2004" name="Nat. Genet.">
        <title>Complete sequencing and characterization of 21,243 full-length human cDNAs.</title>
        <authorList>
            <person name="Ota T."/>
            <person name="Suzuki Y."/>
            <person name="Nishikawa T."/>
            <person name="Otsuki T."/>
            <person name="Sugiyama T."/>
            <person name="Irie R."/>
            <person name="Wakamatsu A."/>
            <person name="Hayashi K."/>
            <person name="Sato H."/>
            <person name="Nagai K."/>
            <person name="Kimura K."/>
            <person name="Makita H."/>
            <person name="Sekine M."/>
            <person name="Obayashi M."/>
            <person name="Nishi T."/>
            <person name="Shibahara T."/>
            <person name="Tanaka T."/>
            <person name="Ishii S."/>
            <person name="Yamamoto J."/>
            <person name="Saito K."/>
            <person name="Kawai Y."/>
            <person name="Isono Y."/>
            <person name="Nakamura Y."/>
            <person name="Nagahari K."/>
            <person name="Murakami K."/>
            <person name="Yasuda T."/>
            <person name="Iwayanagi T."/>
            <person name="Wagatsuma M."/>
            <person name="Shiratori A."/>
            <person name="Sudo H."/>
            <person name="Hosoiri T."/>
            <person name="Kaku Y."/>
            <person name="Kodaira H."/>
            <person name="Kondo H."/>
            <person name="Sugawara M."/>
            <person name="Takahashi M."/>
            <person name="Kanda K."/>
            <person name="Yokoi T."/>
            <person name="Furuya T."/>
            <person name="Kikkawa E."/>
            <person name="Omura Y."/>
            <person name="Abe K."/>
            <person name="Kamihara K."/>
            <person name="Katsuta N."/>
            <person name="Sato K."/>
            <person name="Tanikawa M."/>
            <person name="Yamazaki M."/>
            <person name="Ninomiya K."/>
            <person name="Ishibashi T."/>
            <person name="Yamashita H."/>
            <person name="Murakawa K."/>
            <person name="Fujimori K."/>
            <person name="Tanai H."/>
            <person name="Kimata M."/>
            <person name="Watanabe M."/>
            <person name="Hiraoka S."/>
            <person name="Chiba Y."/>
            <person name="Ishida S."/>
            <person name="Ono Y."/>
            <person name="Takiguchi S."/>
            <person name="Watanabe S."/>
            <person name="Yosida M."/>
            <person name="Hotuta T."/>
            <person name="Kusano J."/>
            <person name="Kanehori K."/>
            <person name="Takahashi-Fujii A."/>
            <person name="Hara H."/>
            <person name="Tanase T.-O."/>
            <person name="Nomura Y."/>
            <person name="Togiya S."/>
            <person name="Komai F."/>
            <person name="Hara R."/>
            <person name="Takeuchi K."/>
            <person name="Arita M."/>
            <person name="Imose N."/>
            <person name="Musashino K."/>
            <person name="Yuuki H."/>
            <person name="Oshima A."/>
            <person name="Sasaki N."/>
            <person name="Aotsuka S."/>
            <person name="Yoshikawa Y."/>
            <person name="Matsunawa H."/>
            <person name="Ichihara T."/>
            <person name="Shiohata N."/>
            <person name="Sano S."/>
            <person name="Moriya S."/>
            <person name="Momiyama H."/>
            <person name="Satoh N."/>
            <person name="Takami S."/>
            <person name="Terashima Y."/>
            <person name="Suzuki O."/>
            <person name="Nakagawa S."/>
            <person name="Senoh A."/>
            <person name="Mizoguchi H."/>
            <person name="Goto Y."/>
            <person name="Shimizu F."/>
            <person name="Wakebe H."/>
            <person name="Hishigaki H."/>
            <person name="Watanabe T."/>
            <person name="Sugiyama A."/>
            <person name="Takemoto M."/>
            <person name="Kawakami B."/>
            <person name="Yamazaki M."/>
            <person name="Watanabe K."/>
            <person name="Kumagai A."/>
            <person name="Itakura S."/>
            <person name="Fukuzumi Y."/>
            <person name="Fujimori Y."/>
            <person name="Komiyama M."/>
            <person name="Tashiro H."/>
            <person name="Tanigami A."/>
            <person name="Fujiwara T."/>
            <person name="Ono T."/>
            <person name="Yamada K."/>
            <person name="Fujii Y."/>
            <person name="Ozaki K."/>
            <person name="Hirao M."/>
            <person name="Ohmori Y."/>
            <person name="Kawabata A."/>
            <person name="Hikiji T."/>
            <person name="Kobatake N."/>
            <person name="Inagaki H."/>
            <person name="Ikema Y."/>
            <person name="Okamoto S."/>
            <person name="Okitani R."/>
            <person name="Kawakami T."/>
            <person name="Noguchi S."/>
            <person name="Itoh T."/>
            <person name="Shigeta K."/>
            <person name="Senba T."/>
            <person name="Matsumura K."/>
            <person name="Nakajima Y."/>
            <person name="Mizuno T."/>
            <person name="Morinaga M."/>
            <person name="Sasaki M."/>
            <person name="Togashi T."/>
            <person name="Oyama M."/>
            <person name="Hata H."/>
            <person name="Watanabe M."/>
            <person name="Komatsu T."/>
            <person name="Mizushima-Sugano J."/>
            <person name="Satoh T."/>
            <person name="Shirai Y."/>
            <person name="Takahashi Y."/>
            <person name="Nakagawa K."/>
            <person name="Okumura K."/>
            <person name="Nagase T."/>
            <person name="Nomura N."/>
            <person name="Kikuchi H."/>
            <person name="Masuho Y."/>
            <person name="Yamashita R."/>
            <person name="Nakai K."/>
            <person name="Yada T."/>
            <person name="Nakamura Y."/>
            <person name="Ohara O."/>
            <person name="Isogai T."/>
            <person name="Sugano S."/>
        </authorList>
    </citation>
    <scope>NUCLEOTIDE SEQUENCE [LARGE SCALE MRNA]</scope>
    <source>
        <tissue>Thymus</tissue>
    </source>
</reference>
<reference key="4">
    <citation type="journal article" date="2003" name="Nature">
        <title>The DNA sequence and analysis of human chromosome 6.</title>
        <authorList>
            <person name="Mungall A.J."/>
            <person name="Palmer S.A."/>
            <person name="Sims S.K."/>
            <person name="Edwards C.A."/>
            <person name="Ashurst J.L."/>
            <person name="Wilming L."/>
            <person name="Jones M.C."/>
            <person name="Horton R."/>
            <person name="Hunt S.E."/>
            <person name="Scott C.E."/>
            <person name="Gilbert J.G.R."/>
            <person name="Clamp M.E."/>
            <person name="Bethel G."/>
            <person name="Milne S."/>
            <person name="Ainscough R."/>
            <person name="Almeida J.P."/>
            <person name="Ambrose K.D."/>
            <person name="Andrews T.D."/>
            <person name="Ashwell R.I.S."/>
            <person name="Babbage A.K."/>
            <person name="Bagguley C.L."/>
            <person name="Bailey J."/>
            <person name="Banerjee R."/>
            <person name="Barker D.J."/>
            <person name="Barlow K.F."/>
            <person name="Bates K."/>
            <person name="Beare D.M."/>
            <person name="Beasley H."/>
            <person name="Beasley O."/>
            <person name="Bird C.P."/>
            <person name="Blakey S.E."/>
            <person name="Bray-Allen S."/>
            <person name="Brook J."/>
            <person name="Brown A.J."/>
            <person name="Brown J.Y."/>
            <person name="Burford D.C."/>
            <person name="Burrill W."/>
            <person name="Burton J."/>
            <person name="Carder C."/>
            <person name="Carter N.P."/>
            <person name="Chapman J.C."/>
            <person name="Clark S.Y."/>
            <person name="Clark G."/>
            <person name="Clee C.M."/>
            <person name="Clegg S."/>
            <person name="Cobley V."/>
            <person name="Collier R.E."/>
            <person name="Collins J.E."/>
            <person name="Colman L.K."/>
            <person name="Corby N.R."/>
            <person name="Coville G.J."/>
            <person name="Culley K.M."/>
            <person name="Dhami P."/>
            <person name="Davies J."/>
            <person name="Dunn M."/>
            <person name="Earthrowl M.E."/>
            <person name="Ellington A.E."/>
            <person name="Evans K.A."/>
            <person name="Faulkner L."/>
            <person name="Francis M.D."/>
            <person name="Frankish A."/>
            <person name="Frankland J."/>
            <person name="French L."/>
            <person name="Garner P."/>
            <person name="Garnett J."/>
            <person name="Ghori M.J."/>
            <person name="Gilby L.M."/>
            <person name="Gillson C.J."/>
            <person name="Glithero R.J."/>
            <person name="Grafham D.V."/>
            <person name="Grant M."/>
            <person name="Gribble S."/>
            <person name="Griffiths C."/>
            <person name="Griffiths M.N.D."/>
            <person name="Hall R."/>
            <person name="Halls K.S."/>
            <person name="Hammond S."/>
            <person name="Harley J.L."/>
            <person name="Hart E.A."/>
            <person name="Heath P.D."/>
            <person name="Heathcott R."/>
            <person name="Holmes S.J."/>
            <person name="Howden P.J."/>
            <person name="Howe K.L."/>
            <person name="Howell G.R."/>
            <person name="Huckle E."/>
            <person name="Humphray S.J."/>
            <person name="Humphries M.D."/>
            <person name="Hunt A.R."/>
            <person name="Johnson C.M."/>
            <person name="Joy A.A."/>
            <person name="Kay M."/>
            <person name="Keenan S.J."/>
            <person name="Kimberley A.M."/>
            <person name="King A."/>
            <person name="Laird G.K."/>
            <person name="Langford C."/>
            <person name="Lawlor S."/>
            <person name="Leongamornlert D.A."/>
            <person name="Leversha M."/>
            <person name="Lloyd C.R."/>
            <person name="Lloyd D.M."/>
            <person name="Loveland J.E."/>
            <person name="Lovell J."/>
            <person name="Martin S."/>
            <person name="Mashreghi-Mohammadi M."/>
            <person name="Maslen G.L."/>
            <person name="Matthews L."/>
            <person name="McCann O.T."/>
            <person name="McLaren S.J."/>
            <person name="McLay K."/>
            <person name="McMurray A."/>
            <person name="Moore M.J.F."/>
            <person name="Mullikin J.C."/>
            <person name="Niblett D."/>
            <person name="Nickerson T."/>
            <person name="Novik K.L."/>
            <person name="Oliver K."/>
            <person name="Overton-Larty E.K."/>
            <person name="Parker A."/>
            <person name="Patel R."/>
            <person name="Pearce A.V."/>
            <person name="Peck A.I."/>
            <person name="Phillimore B.J.C.T."/>
            <person name="Phillips S."/>
            <person name="Plumb R.W."/>
            <person name="Porter K.M."/>
            <person name="Ramsey Y."/>
            <person name="Ranby S.A."/>
            <person name="Rice C.M."/>
            <person name="Ross M.T."/>
            <person name="Searle S.M."/>
            <person name="Sehra H.K."/>
            <person name="Sheridan E."/>
            <person name="Skuce C.D."/>
            <person name="Smith S."/>
            <person name="Smith M."/>
            <person name="Spraggon L."/>
            <person name="Squares S.L."/>
            <person name="Steward C.A."/>
            <person name="Sycamore N."/>
            <person name="Tamlyn-Hall G."/>
            <person name="Tester J."/>
            <person name="Theaker A.J."/>
            <person name="Thomas D.W."/>
            <person name="Thorpe A."/>
            <person name="Tracey A."/>
            <person name="Tromans A."/>
            <person name="Tubby B."/>
            <person name="Wall M."/>
            <person name="Wallis J.M."/>
            <person name="West A.P."/>
            <person name="White S.S."/>
            <person name="Whitehead S.L."/>
            <person name="Whittaker H."/>
            <person name="Wild A."/>
            <person name="Willey D.J."/>
            <person name="Wilmer T.E."/>
            <person name="Wood J.M."/>
            <person name="Wray P.W."/>
            <person name="Wyatt J.C."/>
            <person name="Young L."/>
            <person name="Younger R.M."/>
            <person name="Bentley D.R."/>
            <person name="Coulson A."/>
            <person name="Durbin R.M."/>
            <person name="Hubbard T."/>
            <person name="Sulston J.E."/>
            <person name="Dunham I."/>
            <person name="Rogers J."/>
            <person name="Beck S."/>
        </authorList>
    </citation>
    <scope>NUCLEOTIDE SEQUENCE [LARGE SCALE GENOMIC DNA]</scope>
</reference>
<reference key="5">
    <citation type="submission" date="2005-07" db="EMBL/GenBank/DDBJ databases">
        <authorList>
            <person name="Mural R.J."/>
            <person name="Istrail S."/>
            <person name="Sutton G.G."/>
            <person name="Florea L."/>
            <person name="Halpern A.L."/>
            <person name="Mobarry C.M."/>
            <person name="Lippert R."/>
            <person name="Walenz B."/>
            <person name="Shatkay H."/>
            <person name="Dew I."/>
            <person name="Miller J.R."/>
            <person name="Flanigan M.J."/>
            <person name="Edwards N.J."/>
            <person name="Bolanos R."/>
            <person name="Fasulo D."/>
            <person name="Halldorsson B.V."/>
            <person name="Hannenhalli S."/>
            <person name="Turner R."/>
            <person name="Yooseph S."/>
            <person name="Lu F."/>
            <person name="Nusskern D.R."/>
            <person name="Shue B.C."/>
            <person name="Zheng X.H."/>
            <person name="Zhong F."/>
            <person name="Delcher A.L."/>
            <person name="Huson D.H."/>
            <person name="Kravitz S.A."/>
            <person name="Mouchard L."/>
            <person name="Reinert K."/>
            <person name="Remington K.A."/>
            <person name="Clark A.G."/>
            <person name="Waterman M.S."/>
            <person name="Eichler E.E."/>
            <person name="Adams M.D."/>
            <person name="Hunkapiller M.W."/>
            <person name="Myers E.W."/>
            <person name="Venter J.C."/>
        </authorList>
    </citation>
    <scope>NUCLEOTIDE SEQUENCE [LARGE SCALE GENOMIC DNA]</scope>
</reference>
<reference key="6">
    <citation type="journal article" date="2004" name="Genome Res.">
        <title>The status, quality, and expansion of the NIH full-length cDNA project: the Mammalian Gene Collection (MGC).</title>
        <authorList>
            <consortium name="The MGC Project Team"/>
        </authorList>
    </citation>
    <scope>NUCLEOTIDE SEQUENCE [LARGE SCALE MRNA]</scope>
    <source>
        <tissue>Cerebellum</tissue>
    </source>
</reference>
<reference key="7">
    <citation type="journal article" date="1989" name="J. Biochem.">
        <title>Human spleen histone H1. Isolation and amino acid sequences of three minor variants, H1a, H1c, and H1d.</title>
        <authorList>
            <person name="Ohe Y."/>
            <person name="Hayashi H."/>
            <person name="Iwai K."/>
        </authorList>
    </citation>
    <scope>PROTEIN SEQUENCE OF 2-221</scope>
    <source>
        <tissue>Spleen</tissue>
    </source>
</reference>
<reference key="8">
    <citation type="journal article" date="1994" name="Protein Sci.">
        <title>A proposal for a coherent mammalian histone H1 nomenclature correlated with amino acid sequences.</title>
        <authorList>
            <person name="Parseghian M.H."/>
            <person name="Henschen A.H."/>
            <person name="Krieglstein K.G."/>
            <person name="Hamkalo B.A."/>
        </authorList>
    </citation>
    <scope>NOMENCLATURE</scope>
</reference>
<reference key="9">
    <citation type="journal article" date="2000" name="Chromosome Res.">
        <title>The distribution of somatic H1 subtypes is non-random on active vs. inactive chromatin: distribution in human fetal fibroblasts.</title>
        <authorList>
            <person name="Parseghian M.H."/>
            <person name="Newcomb R.L."/>
            <person name="Winokur S.T."/>
            <person name="Hamkalo B.A."/>
        </authorList>
    </citation>
    <scope>SUBCELLULAR LOCATION</scope>
</reference>
<reference key="10">
    <citation type="journal article" date="2001" name="J. Cell. Biochem.">
        <title>Distribution of somatic H1 subtypes is non-random on active vs. inactive chromatin II: distribution in human adult fibroblasts.</title>
        <authorList>
            <person name="Parseghian M.H."/>
            <person name="Newcomb R.L."/>
            <person name="Hamkalo B.A."/>
        </authorList>
    </citation>
    <scope>SUBCELLULAR LOCATION</scope>
</reference>
<reference key="11">
    <citation type="journal article" date="2005" name="J. Biol. Chem.">
        <title>H1 family histones in the nucleus. Control of binding and localization by the C-terminal domain.</title>
        <authorList>
            <person name="Th'ng J.P."/>
            <person name="Sung R."/>
            <person name="Ye M."/>
            <person name="Hendzel M.J."/>
        </authorList>
    </citation>
    <scope>SUBCELLULAR LOCATION</scope>
</reference>
<reference key="12">
    <citation type="journal article" date="2006" name="Cell">
        <title>Global, in vivo, and site-specific phosphorylation dynamics in signaling networks.</title>
        <authorList>
            <person name="Olsen J.V."/>
            <person name="Blagoev B."/>
            <person name="Gnad F."/>
            <person name="Macek B."/>
            <person name="Kumar C."/>
            <person name="Mortensen P."/>
            <person name="Mann M."/>
        </authorList>
    </citation>
    <scope>PHOSPHORYLATION [LARGE SCALE ANALYSIS] AT THR-18</scope>
    <scope>IDENTIFICATION BY MASS SPECTROMETRY [LARGE SCALE ANALYSIS]</scope>
    <source>
        <tissue>Cervix carcinoma</tissue>
    </source>
</reference>
<reference key="13">
    <citation type="journal article" date="2009" name="Anal. Chem.">
        <title>Lys-N and trypsin cover complementary parts of the phosphoproteome in a refined SCX-based approach.</title>
        <authorList>
            <person name="Gauci S."/>
            <person name="Helbig A.O."/>
            <person name="Slijper M."/>
            <person name="Krijgsveld J."/>
            <person name="Heck A.J."/>
            <person name="Mohammed S."/>
        </authorList>
    </citation>
    <scope>ACETYLATION [LARGE SCALE ANALYSIS] AT SER-2</scope>
    <scope>CLEAVAGE OF INITIATOR METHIONINE [LARGE SCALE ANALYSIS]</scope>
    <scope>IDENTIFICATION BY MASS SPECTROMETRY [LARGE SCALE ANALYSIS]</scope>
</reference>
<reference key="14">
    <citation type="journal article" date="2011" name="BMC Syst. Biol.">
        <title>Initial characterization of the human central proteome.</title>
        <authorList>
            <person name="Burkard T.R."/>
            <person name="Planyavsky M."/>
            <person name="Kaupe I."/>
            <person name="Breitwieser F.P."/>
            <person name="Buerckstuemmer T."/>
            <person name="Bennett K.L."/>
            <person name="Superti-Furga G."/>
            <person name="Colinge J."/>
        </authorList>
    </citation>
    <scope>IDENTIFICATION BY MASS SPECTROMETRY [LARGE SCALE ANALYSIS]</scope>
</reference>
<reference key="15">
    <citation type="journal article" date="2011" name="Sci. Signal.">
        <title>System-wide temporal characterization of the proteome and phosphoproteome of human embryonic stem cell differentiation.</title>
        <authorList>
            <person name="Rigbolt K.T."/>
            <person name="Prokhorova T.A."/>
            <person name="Akimov V."/>
            <person name="Henningsen J."/>
            <person name="Johansen P.T."/>
            <person name="Kratchmarova I."/>
            <person name="Kassem M."/>
            <person name="Mann M."/>
            <person name="Olsen J.V."/>
            <person name="Blagoev B."/>
        </authorList>
    </citation>
    <scope>ACETYLATION [LARGE SCALE ANALYSIS] AT SER-2</scope>
    <scope>PHOSPHORYLATION [LARGE SCALE ANALYSIS] AT SER-2 AND THR-18</scope>
    <scope>CLEAVAGE OF INITIATOR METHIONINE [LARGE SCALE ANALYSIS]</scope>
    <scope>IDENTIFICATION BY MASS SPECTROMETRY [LARGE SCALE ANALYSIS]</scope>
</reference>
<reference key="16">
    <citation type="journal article" date="2012" name="Mol. Cell. Proteomics">
        <title>Comparative large-scale characterisation of plant vs. mammal proteins reveals similar and idiosyncratic N-alpha acetylation features.</title>
        <authorList>
            <person name="Bienvenut W.V."/>
            <person name="Sumpton D."/>
            <person name="Martinez A."/>
            <person name="Lilla S."/>
            <person name="Espagne C."/>
            <person name="Meinnel T."/>
            <person name="Giglione C."/>
        </authorList>
    </citation>
    <scope>ACETYLATION [LARGE SCALE ANALYSIS] AT SER-2</scope>
    <scope>CLEAVAGE OF INITIATOR METHIONINE [LARGE SCALE ANALYSIS]</scope>
    <scope>IDENTIFICATION BY MASS SPECTROMETRY [LARGE SCALE ANALYSIS]</scope>
</reference>
<reference key="17">
    <citation type="journal article" date="2013" name="J. Proteome Res.">
        <title>Toward a comprehensive characterization of a human cancer cell phosphoproteome.</title>
        <authorList>
            <person name="Zhou H."/>
            <person name="Di Palma S."/>
            <person name="Preisinger C."/>
            <person name="Peng M."/>
            <person name="Polat A.N."/>
            <person name="Heck A.J."/>
            <person name="Mohammed S."/>
        </authorList>
    </citation>
    <scope>PHOSPHORYLATION [LARGE SCALE ANALYSIS] AT THR-18</scope>
    <scope>IDENTIFICATION BY MASS SPECTROMETRY [LARGE SCALE ANALYSIS]</scope>
    <source>
        <tissue>Erythroleukemia</tissue>
    </source>
</reference>
<reference key="18">
    <citation type="journal article" date="2015" name="Proteomics">
        <title>N-terminome analysis of the human mitochondrial proteome.</title>
        <authorList>
            <person name="Vaca Jacome A.S."/>
            <person name="Rabilloud T."/>
            <person name="Schaeffer-Reiss C."/>
            <person name="Rompais M."/>
            <person name="Ayoub D."/>
            <person name="Lane L."/>
            <person name="Bairoch A."/>
            <person name="Van Dorsselaer A."/>
            <person name="Carapito C."/>
        </authorList>
    </citation>
    <scope>ACETYLATION [LARGE SCALE ANALYSIS] AT SER-2</scope>
    <scope>CLEAVAGE OF INITIATOR METHIONINE [LARGE SCALE ANALYSIS]</scope>
    <scope>IDENTIFICATION BY MASS SPECTROMETRY [LARGE SCALE ANALYSIS]</scope>
</reference>
<reference key="19">
    <citation type="journal article" date="2016" name="Mol. Cell">
        <title>Metabolic regulation of gene expression by histone lysine beta-hydroxybutyrylation.</title>
        <authorList>
            <person name="Xie Z."/>
            <person name="Zhang D."/>
            <person name="Chung D."/>
            <person name="Tang Z."/>
            <person name="Huang H."/>
            <person name="Dai L."/>
            <person name="Qi S."/>
            <person name="Li J."/>
            <person name="Colak G."/>
            <person name="Chen Y."/>
            <person name="Xia C."/>
            <person name="Peng C."/>
            <person name="Ruan H."/>
            <person name="Kirkey M."/>
            <person name="Wang D."/>
            <person name="Jensen L.M."/>
            <person name="Kwon O.K."/>
            <person name="Lee S."/>
            <person name="Pletcher S.D."/>
            <person name="Tan M."/>
            <person name="Lombard D.B."/>
            <person name="White K.P."/>
            <person name="Zhao H."/>
            <person name="Li J."/>
            <person name="Roeder R.G."/>
            <person name="Yang X."/>
            <person name="Zhao Y."/>
        </authorList>
    </citation>
    <scope>HYDROXYBUTYRYLATION AT LYS-35; LYS-47; LYS-53; LYS-65; LYS-76; LYS-86; LYS-91; LYS-107 AND LYS-170</scope>
</reference>
<name>H13_HUMAN</name>
<accession>P16402</accession>
<accession>B2R751</accession>
<accession>Q2M2I2</accession>
<feature type="initiator methionine" description="Removed" evidence="7 11 12 13 15">
    <location>
        <position position="1"/>
    </location>
</feature>
<feature type="chain" id="PRO_0000195907" description="Histone H1.3">
    <location>
        <begin position="2"/>
        <end position="221"/>
    </location>
</feature>
<feature type="domain" description="H15" evidence="5">
    <location>
        <begin position="37"/>
        <end position="110"/>
    </location>
</feature>
<feature type="region of interest" description="Disordered" evidence="6">
    <location>
        <begin position="1"/>
        <end position="43"/>
    </location>
</feature>
<feature type="region of interest" description="Disordered" evidence="6">
    <location>
        <begin position="90"/>
        <end position="221"/>
    </location>
</feature>
<feature type="compositionally biased region" description="Low complexity" evidence="6">
    <location>
        <begin position="1"/>
        <end position="17"/>
    </location>
</feature>
<feature type="compositionally biased region" description="Basic residues" evidence="6">
    <location>
        <begin position="20"/>
        <end position="36"/>
    </location>
</feature>
<feature type="compositionally biased region" description="Basic residues" evidence="6">
    <location>
        <begin position="120"/>
        <end position="141"/>
    </location>
</feature>
<feature type="compositionally biased region" description="Basic residues" evidence="6">
    <location>
        <begin position="150"/>
        <end position="161"/>
    </location>
</feature>
<feature type="compositionally biased region" description="Basic residues" evidence="6">
    <location>
        <begin position="170"/>
        <end position="179"/>
    </location>
</feature>
<feature type="compositionally biased region" description="Low complexity" evidence="6">
    <location>
        <begin position="180"/>
        <end position="193"/>
    </location>
</feature>
<feature type="compositionally biased region" description="Basic residues" evidence="6">
    <location>
        <begin position="194"/>
        <end position="221"/>
    </location>
</feature>
<feature type="modified residue" description="N-acetylserine" evidence="11 12 13 15">
    <location>
        <position position="2"/>
    </location>
</feature>
<feature type="modified residue" description="Phosphoserine" evidence="12">
    <location>
        <position position="2"/>
    </location>
</feature>
<feature type="modified residue" description="N6-acetyllysine" evidence="4">
    <location>
        <position position="17"/>
    </location>
</feature>
<feature type="modified residue" description="Phosphothreonine" evidence="10 12 14">
    <location>
        <position position="18"/>
    </location>
</feature>
<feature type="modified residue" description="N6-(beta-hydroxybutyryl)lysine" evidence="8">
    <location>
        <position position="35"/>
    </location>
</feature>
<feature type="modified residue" description="N6-(beta-hydroxybutyryl)lysine" evidence="8">
    <location>
        <position position="47"/>
    </location>
</feature>
<feature type="modified residue" description="N6-(beta-hydroxybutyryl)lysine" evidence="8">
    <location>
        <position position="53"/>
    </location>
</feature>
<feature type="modified residue" description="Citrulline" evidence="4">
    <location>
        <position position="55"/>
    </location>
</feature>
<feature type="modified residue" description="N6-(beta-hydroxybutyryl)lysine" evidence="8">
    <location>
        <position position="65"/>
    </location>
</feature>
<feature type="modified residue" description="N6-(beta-hydroxybutyryl)lysine" evidence="8">
    <location>
        <position position="76"/>
    </location>
</feature>
<feature type="modified residue" description="N6-(beta-hydroxybutyryl)lysine" evidence="8">
    <location>
        <position position="86"/>
    </location>
</feature>
<feature type="modified residue" description="N6-(beta-hydroxybutyryl)lysine" evidence="8">
    <location>
        <position position="91"/>
    </location>
</feature>
<feature type="modified residue" description="Phosphoserine; by PKC" evidence="2">
    <location>
        <position position="105"/>
    </location>
</feature>
<feature type="modified residue" description="N6-(beta-hydroxybutyryl)lysine" evidence="8">
    <location>
        <position position="107"/>
    </location>
</feature>
<feature type="modified residue" description="N6-(beta-hydroxybutyryl)lysine" evidence="8">
    <location>
        <position position="170"/>
    </location>
</feature>
<feature type="sequence variant" id="VAR_049306" description="In dbSNP:rs2050949.">
    <original>E</original>
    <variation>K</variation>
    <location>
        <position position="75"/>
    </location>
</feature>
<feature type="helix" evidence="16">
    <location>
        <begin position="43"/>
        <end position="52"/>
    </location>
</feature>
<feature type="strand" evidence="16">
    <location>
        <begin position="53"/>
        <end position="55"/>
    </location>
</feature>
<feature type="helix" evidence="16">
    <location>
        <begin position="59"/>
        <end position="67"/>
    </location>
</feature>
<feature type="helix" evidence="16">
    <location>
        <begin position="78"/>
        <end position="90"/>
    </location>
</feature>
<feature type="strand" evidence="16">
    <location>
        <begin position="95"/>
        <end position="98"/>
    </location>
</feature>
<feature type="strand" evidence="16">
    <location>
        <begin position="100"/>
        <end position="102"/>
    </location>
</feature>
<feature type="strand" evidence="16">
    <location>
        <begin position="105"/>
        <end position="107"/>
    </location>
</feature>
<gene>
    <name evidence="9" type="primary">H1-3</name>
    <name evidence="9" type="synonym">H1F3</name>
    <name evidence="9" type="synonym">HIST1H1D</name>
</gene>
<protein>
    <recommendedName>
        <fullName>Histone H1.3</fullName>
    </recommendedName>
    <alternativeName>
        <fullName>Histone H1c</fullName>
    </alternativeName>
    <alternativeName>
        <fullName>Histone H1s-2</fullName>
    </alternativeName>
</protein>
<sequence length="221" mass="22350">MSETAPLAPTIPAPAEKTPVKKKAKKAGATAGKRKASGPPVSELITKAVAASKERSGVSLAALKKALAAAGYDVEKNNSRIKLGLKSLVSKGTLVQTKGTGASGSFKLNKKAASGEGKPKAKKAGAAKPRKPAGAAKKPKKVAGAATPKKSIKKTPKKVKKPATAAGTKKVAKSAKKVKTPQPKKAAKSPAKAKAPKPKAAKPKSGKPKVTKAKKAAPKKK</sequence>